<keyword id="KW-0227">DNA damage</keyword>
<keyword id="KW-0234">DNA repair</keyword>
<keyword id="KW-0238">DNA-binding</keyword>
<keyword id="KW-0496">Mitochondrion</keyword>
<keyword id="KW-1135">Mitochondrion nucleoid</keyword>
<keyword id="KW-1185">Reference proteome</keyword>
<keyword id="KW-0809">Transit peptide</keyword>
<organism>
    <name type="scientific">Mycosarcoma maydis</name>
    <name type="common">Corn smut fungus</name>
    <name type="synonym">Ustilago maydis</name>
    <dbReference type="NCBI Taxonomy" id="5270"/>
    <lineage>
        <taxon>Eukaryota</taxon>
        <taxon>Fungi</taxon>
        <taxon>Dikarya</taxon>
        <taxon>Basidiomycota</taxon>
        <taxon>Ustilaginomycotina</taxon>
        <taxon>Ustilaginomycetes</taxon>
        <taxon>Ustilaginales</taxon>
        <taxon>Ustilaginaceae</taxon>
        <taxon>Mycosarcoma</taxon>
    </lineage>
</organism>
<evidence type="ECO:0000250" key="1"/>
<evidence type="ECO:0000255" key="2"/>
<evidence type="ECO:0000256" key="3">
    <source>
        <dbReference type="SAM" id="MobiDB-lite"/>
    </source>
</evidence>
<evidence type="ECO:0000305" key="4"/>
<reference key="1">
    <citation type="journal article" date="2006" name="Nature">
        <title>Insights from the genome of the biotrophic fungal plant pathogen Ustilago maydis.</title>
        <authorList>
            <person name="Kaemper J."/>
            <person name="Kahmann R."/>
            <person name="Boelker M."/>
            <person name="Ma L.-J."/>
            <person name="Brefort T."/>
            <person name="Saville B.J."/>
            <person name="Banuett F."/>
            <person name="Kronstad J.W."/>
            <person name="Gold S.E."/>
            <person name="Mueller O."/>
            <person name="Perlin M.H."/>
            <person name="Woesten H.A.B."/>
            <person name="de Vries R."/>
            <person name="Ruiz-Herrera J."/>
            <person name="Reynaga-Pena C.G."/>
            <person name="Snetselaar K."/>
            <person name="McCann M."/>
            <person name="Perez-Martin J."/>
            <person name="Feldbruegge M."/>
            <person name="Basse C.W."/>
            <person name="Steinberg G."/>
            <person name="Ibeas J.I."/>
            <person name="Holloman W."/>
            <person name="Guzman P."/>
            <person name="Farman M.L."/>
            <person name="Stajich J.E."/>
            <person name="Sentandreu R."/>
            <person name="Gonzalez-Prieto J.M."/>
            <person name="Kennell J.C."/>
            <person name="Molina L."/>
            <person name="Schirawski J."/>
            <person name="Mendoza-Mendoza A."/>
            <person name="Greilinger D."/>
            <person name="Muench K."/>
            <person name="Roessel N."/>
            <person name="Scherer M."/>
            <person name="Vranes M."/>
            <person name="Ladendorf O."/>
            <person name="Vincon V."/>
            <person name="Fuchs U."/>
            <person name="Sandrock B."/>
            <person name="Meng S."/>
            <person name="Ho E.C.H."/>
            <person name="Cahill M.J."/>
            <person name="Boyce K.J."/>
            <person name="Klose J."/>
            <person name="Klosterman S.J."/>
            <person name="Deelstra H.J."/>
            <person name="Ortiz-Castellanos L."/>
            <person name="Li W."/>
            <person name="Sanchez-Alonso P."/>
            <person name="Schreier P.H."/>
            <person name="Haeuser-Hahn I."/>
            <person name="Vaupel M."/>
            <person name="Koopmann E."/>
            <person name="Friedrich G."/>
            <person name="Voss H."/>
            <person name="Schlueter T."/>
            <person name="Margolis J."/>
            <person name="Platt D."/>
            <person name="Swimmer C."/>
            <person name="Gnirke A."/>
            <person name="Chen F."/>
            <person name="Vysotskaia V."/>
            <person name="Mannhaupt G."/>
            <person name="Gueldener U."/>
            <person name="Muensterkoetter M."/>
            <person name="Haase D."/>
            <person name="Oesterheld M."/>
            <person name="Mewes H.-W."/>
            <person name="Mauceli E.W."/>
            <person name="DeCaprio D."/>
            <person name="Wade C.M."/>
            <person name="Butler J."/>
            <person name="Young S.K."/>
            <person name="Jaffe D.B."/>
            <person name="Calvo S.E."/>
            <person name="Nusbaum C."/>
            <person name="Galagan J.E."/>
            <person name="Birren B.W."/>
        </authorList>
    </citation>
    <scope>NUCLEOTIDE SEQUENCE [LARGE SCALE GENOMIC DNA]</scope>
    <source>
        <strain>DSM 14603 / FGSC 9021 / UM521</strain>
    </source>
</reference>
<reference key="2">
    <citation type="submission" date="2014-09" db="EMBL/GenBank/DDBJ databases">
        <authorList>
            <person name="Gueldener U."/>
            <person name="Muensterkoetter M."/>
            <person name="Walter M.C."/>
            <person name="Mannhaupt G."/>
            <person name="Kahmann R."/>
        </authorList>
    </citation>
    <scope>GENOME REANNOTATION</scope>
    <source>
        <strain>DSM 14603 / FGSC 9021 / UM521</strain>
    </source>
</reference>
<gene>
    <name type="primary">MGM101</name>
    <name type="ORF">UMAG_04831</name>
</gene>
<proteinExistence type="inferred from homology"/>
<name>MG101_MYCMD</name>
<sequence length="331" mass="35689">MRTMLTCVARSALRQTSMSAPARACFSASAPALSSRSRNYSKQQQQQPVARTGLKDLHPLPESMREQLESSDTPQEPYTASGNSNDPAVHSSRPASQPAEPEVSPRVAAPGLVNGSSSKNGSPSSASSNGASSSGASSSGTYSSGNASIPISNISEAWGTSFAGLGERSFSKEAIDVLMAPINEADVEIKPDGLIYLPEIKYRRILNKAFGPGGWGMAPRSETNVGQGIVSREWVLICQGRFVATARGEQEFFKPSGVPTASEGAKSNALMRCCKDLGVSSELWDPRFIRQFRKKHCIEVWAQDTAGKKKKLWRRKDDPPFEYPWKETGTA</sequence>
<protein>
    <recommendedName>
        <fullName>Mitochondrial genome maintenance protein MGM101</fullName>
    </recommendedName>
</protein>
<feature type="transit peptide" description="Mitochondrion" evidence="2">
    <location>
        <begin position="1"/>
        <end position="40"/>
    </location>
</feature>
<feature type="chain" id="PRO_0000045819" description="Mitochondrial genome maintenance protein MGM101">
    <location>
        <begin position="41"/>
        <end position="331"/>
    </location>
</feature>
<feature type="region of interest" description="Disordered" evidence="3">
    <location>
        <begin position="32"/>
        <end position="143"/>
    </location>
</feature>
<feature type="region of interest" description="Disordered" evidence="3">
    <location>
        <begin position="312"/>
        <end position="331"/>
    </location>
</feature>
<feature type="compositionally biased region" description="Polar residues" evidence="3">
    <location>
        <begin position="40"/>
        <end position="49"/>
    </location>
</feature>
<feature type="compositionally biased region" description="Basic and acidic residues" evidence="3">
    <location>
        <begin position="53"/>
        <end position="68"/>
    </location>
</feature>
<feature type="compositionally biased region" description="Polar residues" evidence="3">
    <location>
        <begin position="70"/>
        <end position="86"/>
    </location>
</feature>
<feature type="compositionally biased region" description="Low complexity" evidence="3">
    <location>
        <begin position="114"/>
        <end position="143"/>
    </location>
</feature>
<comment type="function">
    <text evidence="1">Performs an essential function in the repair of oxidatively damaged mtDNA that is required for the maintenance of the mitochondrial genome. Binds to DNA (By similarity).</text>
</comment>
<comment type="subcellular location">
    <subcellularLocation>
        <location evidence="1">Mitochondrion matrix</location>
        <location evidence="1">Mitochondrion nucleoid</location>
    </subcellularLocation>
</comment>
<comment type="similarity">
    <text evidence="4">Belongs to the MGM101 family.</text>
</comment>
<accession>Q4P4Y2</accession>
<accession>A0A0D1DQT5</accession>
<dbReference type="EMBL" id="CM003156">
    <property type="protein sequence ID" value="KIS66769.1"/>
    <property type="molecule type" value="Genomic_DNA"/>
</dbReference>
<dbReference type="RefSeq" id="XP_011391684.1">
    <property type="nucleotide sequence ID" value="XM_011393382.1"/>
</dbReference>
<dbReference type="FunCoup" id="Q4P4Y2">
    <property type="interactions" value="23"/>
</dbReference>
<dbReference type="STRING" id="237631.Q4P4Y2"/>
<dbReference type="EnsemblFungi" id="KIS66769">
    <property type="protein sequence ID" value="KIS66769"/>
    <property type="gene ID" value="UMAG_04831"/>
</dbReference>
<dbReference type="GeneID" id="23564888"/>
<dbReference type="KEGG" id="uma:UMAG_04831"/>
<dbReference type="VEuPathDB" id="FungiDB:UMAG_04831"/>
<dbReference type="eggNOG" id="ENOG502RXU4">
    <property type="taxonomic scope" value="Eukaryota"/>
</dbReference>
<dbReference type="HOGENOM" id="CLU_028692_0_1_1"/>
<dbReference type="InParanoid" id="Q4P4Y2"/>
<dbReference type="OMA" id="REWVLIC"/>
<dbReference type="OrthoDB" id="17164at2759"/>
<dbReference type="Proteomes" id="UP000000561">
    <property type="component" value="Chromosome 17"/>
</dbReference>
<dbReference type="GO" id="GO:0000262">
    <property type="term" value="C:mitochondrial chromosome"/>
    <property type="evidence" value="ECO:0007669"/>
    <property type="project" value="InterPro"/>
</dbReference>
<dbReference type="GO" id="GO:0042645">
    <property type="term" value="C:mitochondrial nucleoid"/>
    <property type="evidence" value="ECO:0000318"/>
    <property type="project" value="GO_Central"/>
</dbReference>
<dbReference type="GO" id="GO:0003677">
    <property type="term" value="F:DNA binding"/>
    <property type="evidence" value="ECO:0000318"/>
    <property type="project" value="GO_Central"/>
</dbReference>
<dbReference type="GO" id="GO:0003697">
    <property type="term" value="F:single-stranded DNA binding"/>
    <property type="evidence" value="ECO:0007669"/>
    <property type="project" value="EnsemblFungi"/>
</dbReference>
<dbReference type="GO" id="GO:0036297">
    <property type="term" value="P:interstrand cross-link repair"/>
    <property type="evidence" value="ECO:0000318"/>
    <property type="project" value="GO_Central"/>
</dbReference>
<dbReference type="GO" id="GO:0000002">
    <property type="term" value="P:mitochondrial genome maintenance"/>
    <property type="evidence" value="ECO:0000318"/>
    <property type="project" value="GO_Central"/>
</dbReference>
<dbReference type="GO" id="GO:0000725">
    <property type="term" value="P:recombinational repair"/>
    <property type="evidence" value="ECO:0000318"/>
    <property type="project" value="GO_Central"/>
</dbReference>
<dbReference type="InterPro" id="IPR009446">
    <property type="entry name" value="Mgm101"/>
</dbReference>
<dbReference type="PANTHER" id="PTHR31404">
    <property type="entry name" value="MITOCHONDRIAL GENOME MAINTENANCE PROTEIN MGM101"/>
    <property type="match status" value="1"/>
</dbReference>
<dbReference type="PANTHER" id="PTHR31404:SF0">
    <property type="entry name" value="MITOCHONDRIAL GENOME MAINTENANCE PROTEIN MGM101"/>
    <property type="match status" value="1"/>
</dbReference>
<dbReference type="Pfam" id="PF06420">
    <property type="entry name" value="Mgm101p"/>
    <property type="match status" value="1"/>
</dbReference>